<protein>
    <recommendedName>
        <fullName evidence="1">Aspartate 1-decarboxylase</fullName>
        <ecNumber evidence="1">4.1.1.11</ecNumber>
    </recommendedName>
    <alternativeName>
        <fullName evidence="1">Aspartate alpha-decarboxylase</fullName>
    </alternativeName>
    <component>
        <recommendedName>
            <fullName evidence="1">Aspartate 1-decarboxylase beta chain</fullName>
        </recommendedName>
    </component>
    <component>
        <recommendedName>
            <fullName evidence="1">Aspartate 1-decarboxylase alpha chain</fullName>
        </recommendedName>
    </component>
</protein>
<gene>
    <name evidence="1" type="primary">panD</name>
    <name type="ordered locus">Rfer_3032</name>
</gene>
<feature type="chain" id="PRO_0000307061" description="Aspartate 1-decarboxylase beta chain" evidence="1">
    <location>
        <begin position="1"/>
        <end position="24"/>
    </location>
</feature>
<feature type="chain" id="PRO_0000307062" description="Aspartate 1-decarboxylase alpha chain" evidence="1">
    <location>
        <begin position="25"/>
        <end position="135"/>
    </location>
</feature>
<feature type="active site" description="Schiff-base intermediate with substrate; via pyruvic acid" evidence="1">
    <location>
        <position position="25"/>
    </location>
</feature>
<feature type="active site" description="Proton donor" evidence="1">
    <location>
        <position position="58"/>
    </location>
</feature>
<feature type="binding site" evidence="1">
    <location>
        <position position="57"/>
    </location>
    <ligand>
        <name>substrate</name>
    </ligand>
</feature>
<feature type="binding site" evidence="1">
    <location>
        <begin position="73"/>
        <end position="75"/>
    </location>
    <ligand>
        <name>substrate</name>
    </ligand>
</feature>
<feature type="modified residue" description="Pyruvic acid (Ser)" evidence="1">
    <location>
        <position position="25"/>
    </location>
</feature>
<evidence type="ECO:0000255" key="1">
    <source>
        <dbReference type="HAMAP-Rule" id="MF_00446"/>
    </source>
</evidence>
<comment type="function">
    <text evidence="1">Catalyzes the pyruvoyl-dependent decarboxylation of aspartate to produce beta-alanine.</text>
</comment>
<comment type="catalytic activity">
    <reaction evidence="1">
        <text>L-aspartate + H(+) = beta-alanine + CO2</text>
        <dbReference type="Rhea" id="RHEA:19497"/>
        <dbReference type="ChEBI" id="CHEBI:15378"/>
        <dbReference type="ChEBI" id="CHEBI:16526"/>
        <dbReference type="ChEBI" id="CHEBI:29991"/>
        <dbReference type="ChEBI" id="CHEBI:57966"/>
        <dbReference type="EC" id="4.1.1.11"/>
    </reaction>
</comment>
<comment type="cofactor">
    <cofactor evidence="1">
        <name>pyruvate</name>
        <dbReference type="ChEBI" id="CHEBI:15361"/>
    </cofactor>
    <text evidence="1">Binds 1 pyruvoyl group covalently per subunit.</text>
</comment>
<comment type="pathway">
    <text evidence="1">Cofactor biosynthesis; (R)-pantothenate biosynthesis; beta-alanine from L-aspartate: step 1/1.</text>
</comment>
<comment type="subunit">
    <text evidence="1">Heterooctamer of four alpha and four beta subunits.</text>
</comment>
<comment type="subcellular location">
    <subcellularLocation>
        <location evidence="1">Cytoplasm</location>
    </subcellularLocation>
</comment>
<comment type="PTM">
    <text evidence="1">Is synthesized initially as an inactive proenzyme, which is activated by self-cleavage at a specific serine bond to produce a beta-subunit with a hydroxyl group at its C-terminus and an alpha-subunit with a pyruvoyl group at its N-terminus.</text>
</comment>
<comment type="similarity">
    <text evidence="1">Belongs to the PanD family.</text>
</comment>
<organism>
    <name type="scientific">Albidiferax ferrireducens (strain ATCC BAA-621 / DSM 15236 / T118)</name>
    <name type="common">Rhodoferax ferrireducens</name>
    <dbReference type="NCBI Taxonomy" id="338969"/>
    <lineage>
        <taxon>Bacteria</taxon>
        <taxon>Pseudomonadati</taxon>
        <taxon>Pseudomonadota</taxon>
        <taxon>Betaproteobacteria</taxon>
        <taxon>Burkholderiales</taxon>
        <taxon>Comamonadaceae</taxon>
        <taxon>Rhodoferax</taxon>
    </lineage>
</organism>
<accession>Q21U10</accession>
<proteinExistence type="inferred from homology"/>
<dbReference type="EC" id="4.1.1.11" evidence="1"/>
<dbReference type="EMBL" id="CP000267">
    <property type="protein sequence ID" value="ABD70743.1"/>
    <property type="molecule type" value="Genomic_DNA"/>
</dbReference>
<dbReference type="RefSeq" id="WP_011465309.1">
    <property type="nucleotide sequence ID" value="NC_007908.1"/>
</dbReference>
<dbReference type="SMR" id="Q21U10"/>
<dbReference type="STRING" id="338969.Rfer_3032"/>
<dbReference type="KEGG" id="rfr:Rfer_3032"/>
<dbReference type="eggNOG" id="COG0853">
    <property type="taxonomic scope" value="Bacteria"/>
</dbReference>
<dbReference type="HOGENOM" id="CLU_115305_2_0_4"/>
<dbReference type="OrthoDB" id="9803983at2"/>
<dbReference type="UniPathway" id="UPA00028">
    <property type="reaction ID" value="UER00002"/>
</dbReference>
<dbReference type="Proteomes" id="UP000008332">
    <property type="component" value="Chromosome"/>
</dbReference>
<dbReference type="GO" id="GO:0005829">
    <property type="term" value="C:cytosol"/>
    <property type="evidence" value="ECO:0007669"/>
    <property type="project" value="TreeGrafter"/>
</dbReference>
<dbReference type="GO" id="GO:0004068">
    <property type="term" value="F:aspartate 1-decarboxylase activity"/>
    <property type="evidence" value="ECO:0007669"/>
    <property type="project" value="UniProtKB-UniRule"/>
</dbReference>
<dbReference type="GO" id="GO:0006523">
    <property type="term" value="P:alanine biosynthetic process"/>
    <property type="evidence" value="ECO:0007669"/>
    <property type="project" value="InterPro"/>
</dbReference>
<dbReference type="GO" id="GO:0015940">
    <property type="term" value="P:pantothenate biosynthetic process"/>
    <property type="evidence" value="ECO:0007669"/>
    <property type="project" value="UniProtKB-UniRule"/>
</dbReference>
<dbReference type="CDD" id="cd06919">
    <property type="entry name" value="Asp_decarbox"/>
    <property type="match status" value="1"/>
</dbReference>
<dbReference type="Gene3D" id="2.40.40.20">
    <property type="match status" value="1"/>
</dbReference>
<dbReference type="HAMAP" id="MF_00446">
    <property type="entry name" value="PanD"/>
    <property type="match status" value="1"/>
</dbReference>
<dbReference type="InterPro" id="IPR009010">
    <property type="entry name" value="Asp_de-COase-like_dom_sf"/>
</dbReference>
<dbReference type="InterPro" id="IPR003190">
    <property type="entry name" value="Asp_decarbox"/>
</dbReference>
<dbReference type="NCBIfam" id="TIGR00223">
    <property type="entry name" value="panD"/>
    <property type="match status" value="1"/>
</dbReference>
<dbReference type="PANTHER" id="PTHR21012">
    <property type="entry name" value="ASPARTATE 1-DECARBOXYLASE"/>
    <property type="match status" value="1"/>
</dbReference>
<dbReference type="PANTHER" id="PTHR21012:SF0">
    <property type="entry name" value="ASPARTATE 1-DECARBOXYLASE"/>
    <property type="match status" value="1"/>
</dbReference>
<dbReference type="Pfam" id="PF02261">
    <property type="entry name" value="Asp_decarbox"/>
    <property type="match status" value="1"/>
</dbReference>
<dbReference type="PIRSF" id="PIRSF006246">
    <property type="entry name" value="Asp_decarbox"/>
    <property type="match status" value="1"/>
</dbReference>
<dbReference type="SUPFAM" id="SSF50692">
    <property type="entry name" value="ADC-like"/>
    <property type="match status" value="1"/>
</dbReference>
<sequence>MLRTLLKSKIHRATVTDCELHYEGSCAIDEDLLDAANLLENEQIHIWNINNGERFVTYAIRGERGTGIISVNGSAARRAAVGDLIIIAAFAQVPEAQLDGFKPQLVFVDANNRVQHQRSHIPVQAAAHPQEGRPS</sequence>
<keyword id="KW-0068">Autocatalytic cleavage</keyword>
<keyword id="KW-0963">Cytoplasm</keyword>
<keyword id="KW-0210">Decarboxylase</keyword>
<keyword id="KW-0456">Lyase</keyword>
<keyword id="KW-0566">Pantothenate biosynthesis</keyword>
<keyword id="KW-0670">Pyruvate</keyword>
<keyword id="KW-1185">Reference proteome</keyword>
<keyword id="KW-0704">Schiff base</keyword>
<keyword id="KW-0865">Zymogen</keyword>
<name>PAND_ALBFT</name>
<reference key="1">
    <citation type="submission" date="2006-02" db="EMBL/GenBank/DDBJ databases">
        <title>Complete sequence of chromosome of Rhodoferax ferrireducens DSM 15236.</title>
        <authorList>
            <person name="Copeland A."/>
            <person name="Lucas S."/>
            <person name="Lapidus A."/>
            <person name="Barry K."/>
            <person name="Detter J.C."/>
            <person name="Glavina del Rio T."/>
            <person name="Hammon N."/>
            <person name="Israni S."/>
            <person name="Pitluck S."/>
            <person name="Brettin T."/>
            <person name="Bruce D."/>
            <person name="Han C."/>
            <person name="Tapia R."/>
            <person name="Gilna P."/>
            <person name="Kiss H."/>
            <person name="Schmutz J."/>
            <person name="Larimer F."/>
            <person name="Land M."/>
            <person name="Kyrpides N."/>
            <person name="Ivanova N."/>
            <person name="Richardson P."/>
        </authorList>
    </citation>
    <scope>NUCLEOTIDE SEQUENCE [LARGE SCALE GENOMIC DNA]</scope>
    <source>
        <strain>ATCC BAA-621 / DSM 15236 / T118</strain>
    </source>
</reference>